<reference key="1">
    <citation type="journal article" date="2002" name="Proc. Natl. Acad. Sci. U.S.A.">
        <title>The genome sequence of the facultative intracellular pathogen Brucella melitensis.</title>
        <authorList>
            <person name="DelVecchio V.G."/>
            <person name="Kapatral V."/>
            <person name="Redkar R.J."/>
            <person name="Patra G."/>
            <person name="Mujer C."/>
            <person name="Los T."/>
            <person name="Ivanova N."/>
            <person name="Anderson I."/>
            <person name="Bhattacharyya A."/>
            <person name="Lykidis A."/>
            <person name="Reznik G."/>
            <person name="Jablonski L."/>
            <person name="Larsen N."/>
            <person name="D'Souza M."/>
            <person name="Bernal A."/>
            <person name="Mazur M."/>
            <person name="Goltsman E."/>
            <person name="Selkov E."/>
            <person name="Elzer P.H."/>
            <person name="Hagius S."/>
            <person name="O'Callaghan D."/>
            <person name="Letesson J.-J."/>
            <person name="Haselkorn R."/>
            <person name="Kyrpides N.C."/>
            <person name="Overbeek R."/>
        </authorList>
    </citation>
    <scope>NUCLEOTIDE SEQUENCE [LARGE SCALE GENOMIC DNA]</scope>
    <source>
        <strain>ATCC 23456 / CCUG 17765 / NCTC 10094 / 16M</strain>
    </source>
</reference>
<reference key="2">
    <citation type="journal article" date="2000" name="Microb. Comp. Genomics">
        <title>Identification of four genes of the Brucella melitensis ATP synthase operon F0 sector: relationship with the Rhodospirillaceae family.</title>
        <authorList>
            <person name="Hernandez-Castro R."/>
            <person name="Verdugo-Rodriguez A."/>
            <person name="Gutierrez-Pabello J.A."/>
            <person name="Adams L.G."/>
            <person name="Suarez-Guemes F."/>
            <person name="Sahagun-Ruiz A."/>
        </authorList>
    </citation>
    <scope>NUCLEOTIDE SEQUENCE [GENOMIC DNA] OF 69-249</scope>
    <source>
        <strain>133</strain>
    </source>
</reference>
<organism>
    <name type="scientific">Brucella melitensis biotype 1 (strain ATCC 23456 / CCUG 17765 / NCTC 10094 / 16M)</name>
    <dbReference type="NCBI Taxonomy" id="224914"/>
    <lineage>
        <taxon>Bacteria</taxon>
        <taxon>Pseudomonadati</taxon>
        <taxon>Pseudomonadota</taxon>
        <taxon>Alphaproteobacteria</taxon>
        <taxon>Hyphomicrobiales</taxon>
        <taxon>Brucellaceae</taxon>
        <taxon>Brucella/Ochrobactrum group</taxon>
        <taxon>Brucella</taxon>
    </lineage>
</organism>
<dbReference type="EMBL" id="AE008917">
    <property type="protein sequence ID" value="AAL52727.1"/>
    <property type="status" value="ALT_INIT"/>
    <property type="molecule type" value="Genomic_DNA"/>
</dbReference>
<dbReference type="EMBL" id="AF054609">
    <property type="protein sequence ID" value="AAC08028.1"/>
    <property type="status" value="ALT_INIT"/>
    <property type="molecule type" value="Genomic_DNA"/>
</dbReference>
<dbReference type="PIR" id="AD3445">
    <property type="entry name" value="AD3445"/>
</dbReference>
<dbReference type="RefSeq" id="WP_002963543.1">
    <property type="nucleotide sequence ID" value="NZ_GG703778.1"/>
</dbReference>
<dbReference type="SMR" id="Q8YFH6"/>
<dbReference type="KEGG" id="bme:BMEI1546"/>
<dbReference type="KEGG" id="bmel:DK63_1947"/>
<dbReference type="PATRIC" id="fig|224914.52.peg.2048"/>
<dbReference type="eggNOG" id="COG0356">
    <property type="taxonomic scope" value="Bacteria"/>
</dbReference>
<dbReference type="PhylomeDB" id="Q8YFH6"/>
<dbReference type="Proteomes" id="UP000000419">
    <property type="component" value="Chromosome I"/>
</dbReference>
<dbReference type="GO" id="GO:0005886">
    <property type="term" value="C:plasma membrane"/>
    <property type="evidence" value="ECO:0007669"/>
    <property type="project" value="UniProtKB-SubCell"/>
</dbReference>
<dbReference type="GO" id="GO:0045259">
    <property type="term" value="C:proton-transporting ATP synthase complex"/>
    <property type="evidence" value="ECO:0007669"/>
    <property type="project" value="UniProtKB-KW"/>
</dbReference>
<dbReference type="GO" id="GO:0046933">
    <property type="term" value="F:proton-transporting ATP synthase activity, rotational mechanism"/>
    <property type="evidence" value="ECO:0007669"/>
    <property type="project" value="UniProtKB-UniRule"/>
</dbReference>
<dbReference type="CDD" id="cd00310">
    <property type="entry name" value="ATP-synt_Fo_a_6"/>
    <property type="match status" value="1"/>
</dbReference>
<dbReference type="FunFam" id="1.20.120.220:FF:000003">
    <property type="entry name" value="ATP synthase subunit a"/>
    <property type="match status" value="1"/>
</dbReference>
<dbReference type="Gene3D" id="1.20.120.220">
    <property type="entry name" value="ATP synthase, F0 complex, subunit A"/>
    <property type="match status" value="1"/>
</dbReference>
<dbReference type="HAMAP" id="MF_01393">
    <property type="entry name" value="ATP_synth_a_bact"/>
    <property type="match status" value="1"/>
</dbReference>
<dbReference type="InterPro" id="IPR000568">
    <property type="entry name" value="ATP_synth_F0_asu"/>
</dbReference>
<dbReference type="InterPro" id="IPR023011">
    <property type="entry name" value="ATP_synth_F0_asu_AS"/>
</dbReference>
<dbReference type="InterPro" id="IPR045083">
    <property type="entry name" value="ATP_synth_F0_asu_bact/mt"/>
</dbReference>
<dbReference type="InterPro" id="IPR035908">
    <property type="entry name" value="F0_ATP_A_sf"/>
</dbReference>
<dbReference type="NCBIfam" id="TIGR01131">
    <property type="entry name" value="ATP_synt_6_or_A"/>
    <property type="match status" value="1"/>
</dbReference>
<dbReference type="NCBIfam" id="NF004482">
    <property type="entry name" value="PRK05815.2-4"/>
    <property type="match status" value="1"/>
</dbReference>
<dbReference type="PANTHER" id="PTHR11410">
    <property type="entry name" value="ATP SYNTHASE SUBUNIT A"/>
    <property type="match status" value="1"/>
</dbReference>
<dbReference type="PANTHER" id="PTHR11410:SF0">
    <property type="entry name" value="ATP SYNTHASE SUBUNIT A"/>
    <property type="match status" value="1"/>
</dbReference>
<dbReference type="Pfam" id="PF00119">
    <property type="entry name" value="ATP-synt_A"/>
    <property type="match status" value="1"/>
</dbReference>
<dbReference type="PRINTS" id="PR00123">
    <property type="entry name" value="ATPASEA"/>
</dbReference>
<dbReference type="SUPFAM" id="SSF81336">
    <property type="entry name" value="F1F0 ATP synthase subunit A"/>
    <property type="match status" value="1"/>
</dbReference>
<dbReference type="PROSITE" id="PS00449">
    <property type="entry name" value="ATPASE_A"/>
    <property type="match status" value="1"/>
</dbReference>
<protein>
    <recommendedName>
        <fullName evidence="1">ATP synthase subunit a</fullName>
    </recommendedName>
    <alternativeName>
        <fullName evidence="1">ATP synthase F0 sector subunit a</fullName>
    </alternativeName>
    <alternativeName>
        <fullName evidence="1">F-ATPase subunit 6</fullName>
    </alternativeName>
</protein>
<gene>
    <name evidence="1" type="primary">atpB</name>
    <name type="ordered locus">BMEI1546</name>
</gene>
<proteinExistence type="inferred from homology"/>
<keyword id="KW-0066">ATP synthesis</keyword>
<keyword id="KW-0997">Cell inner membrane</keyword>
<keyword id="KW-1003">Cell membrane</keyword>
<keyword id="KW-0138">CF(0)</keyword>
<keyword id="KW-0375">Hydrogen ion transport</keyword>
<keyword id="KW-0406">Ion transport</keyword>
<keyword id="KW-0472">Membrane</keyword>
<keyword id="KW-0812">Transmembrane</keyword>
<keyword id="KW-1133">Transmembrane helix</keyword>
<keyword id="KW-0813">Transport</keyword>
<evidence type="ECO:0000255" key="1">
    <source>
        <dbReference type="HAMAP-Rule" id="MF_01393"/>
    </source>
</evidence>
<evidence type="ECO:0000305" key="2"/>
<name>ATP6_BRUME</name>
<comment type="function">
    <text evidence="1">Key component of the proton channel; it plays a direct role in the translocation of protons across the membrane.</text>
</comment>
<comment type="subunit">
    <text evidence="1">F-type ATPases have 2 components, CF(1) - the catalytic core - and CF(0) - the membrane proton channel. CF(1) has five subunits: alpha(3), beta(3), gamma(1), delta(1), epsilon(1). CF(0) has three main subunits: a(1), b(2) and c(9-12). The alpha and beta chains form an alternating ring which encloses part of the gamma chain. CF(1) is attached to CF(0) by a central stalk formed by the gamma and epsilon chains, while a peripheral stalk is formed by the delta and b chains.</text>
</comment>
<comment type="subcellular location">
    <subcellularLocation>
        <location evidence="1">Cell inner membrane</location>
        <topology evidence="1">Multi-pass membrane protein</topology>
    </subcellularLocation>
</comment>
<comment type="similarity">
    <text evidence="1">Belongs to the ATPase A chain family.</text>
</comment>
<comment type="sequence caution" evidence="2">
    <conflict type="erroneous initiation">
        <sequence resource="EMBL-CDS" id="AAC08028"/>
    </conflict>
</comment>
<comment type="sequence caution" evidence="2">
    <conflict type="erroneous initiation">
        <sequence resource="EMBL-CDS" id="AAL52727"/>
    </conflict>
</comment>
<sequence>MANDPIHQFQVSRWIPIDVGGVDLSFTNVSAFMVATVVLASGFLYLTSSGRGLIPTRLQSVSEMAYEFVATSLRDSAGSKGMKFFPFVFSLFMFVLVANFIGLFPYFYTVTSQIIVTFALSLLVIGTVIFYGFFKHGFGFLKLFVPSGVPGIIVPLVVLIEIISFLSRPISLSVRLFANMLAGHITLKVFAGFVVSLSSLGALGIGGAVLPLLMTVAITALEFLVAFLQAYVFTVLTCMYINDAVHPGH</sequence>
<accession>Q8YFH6</accession>
<accession>O68817</accession>
<feature type="chain" id="PRO_0000362256" description="ATP synthase subunit a">
    <location>
        <begin position="1"/>
        <end position="249"/>
    </location>
</feature>
<feature type="transmembrane region" description="Helical" evidence="1">
    <location>
        <begin position="26"/>
        <end position="46"/>
    </location>
</feature>
<feature type="transmembrane region" description="Helical" evidence="1">
    <location>
        <begin position="84"/>
        <end position="104"/>
    </location>
</feature>
<feature type="transmembrane region" description="Helical" evidence="1">
    <location>
        <begin position="114"/>
        <end position="134"/>
    </location>
</feature>
<feature type="transmembrane region" description="Helical" evidence="1">
    <location>
        <begin position="143"/>
        <end position="163"/>
    </location>
</feature>
<feature type="transmembrane region" description="Helical" evidence="1">
    <location>
        <begin position="185"/>
        <end position="205"/>
    </location>
</feature>
<feature type="transmembrane region" description="Helical" evidence="1">
    <location>
        <begin position="208"/>
        <end position="228"/>
    </location>
</feature>
<feature type="sequence variant" description="In strain: 133.">
    <original>S</original>
    <variation>T</variation>
    <location>
        <position position="171"/>
    </location>
</feature>
<feature type="sequence variant" description="In strain: 133.">
    <original>VFA</original>
    <variation>FSP</variation>
    <location>
        <begin position="189"/>
        <end position="191"/>
    </location>
</feature>